<reference key="1">
    <citation type="journal article" date="2006" name="Proc. Natl. Acad. Sci. U.S.A.">
        <title>The complete genome of Rhodococcus sp. RHA1 provides insights into a catabolic powerhouse.</title>
        <authorList>
            <person name="McLeod M.P."/>
            <person name="Warren R.L."/>
            <person name="Hsiao W.W.L."/>
            <person name="Araki N."/>
            <person name="Myhre M."/>
            <person name="Fernandes C."/>
            <person name="Miyazawa D."/>
            <person name="Wong W."/>
            <person name="Lillquist A.L."/>
            <person name="Wang D."/>
            <person name="Dosanjh M."/>
            <person name="Hara H."/>
            <person name="Petrescu A."/>
            <person name="Morin R.D."/>
            <person name="Yang G."/>
            <person name="Stott J.M."/>
            <person name="Schein J.E."/>
            <person name="Shin H."/>
            <person name="Smailus D."/>
            <person name="Siddiqui A.S."/>
            <person name="Marra M.A."/>
            <person name="Jones S.J.M."/>
            <person name="Holt R."/>
            <person name="Brinkman F.S.L."/>
            <person name="Miyauchi K."/>
            <person name="Fukuda M."/>
            <person name="Davies J.E."/>
            <person name="Mohn W.W."/>
            <person name="Eltis L.D."/>
        </authorList>
    </citation>
    <scope>NUCLEOTIDE SEQUENCE [LARGE SCALE GENOMIC DNA]</scope>
    <source>
        <strain>RHA1</strain>
    </source>
</reference>
<gene>
    <name evidence="1" type="primary">rpmC</name>
    <name type="ordered locus">RHA1_ro06141</name>
</gene>
<dbReference type="EMBL" id="CP000431">
    <property type="protein sequence ID" value="ABG97918.1"/>
    <property type="molecule type" value="Genomic_DNA"/>
</dbReference>
<dbReference type="RefSeq" id="WP_005239637.1">
    <property type="nucleotide sequence ID" value="NC_008268.1"/>
</dbReference>
<dbReference type="SMR" id="Q0S3G8"/>
<dbReference type="GeneID" id="69890524"/>
<dbReference type="KEGG" id="rha:RHA1_ro06141"/>
<dbReference type="eggNOG" id="COG0255">
    <property type="taxonomic scope" value="Bacteria"/>
</dbReference>
<dbReference type="HOGENOM" id="CLU_158491_3_3_11"/>
<dbReference type="OrthoDB" id="9815192at2"/>
<dbReference type="Proteomes" id="UP000008710">
    <property type="component" value="Chromosome"/>
</dbReference>
<dbReference type="GO" id="GO:0022625">
    <property type="term" value="C:cytosolic large ribosomal subunit"/>
    <property type="evidence" value="ECO:0007669"/>
    <property type="project" value="TreeGrafter"/>
</dbReference>
<dbReference type="GO" id="GO:0003735">
    <property type="term" value="F:structural constituent of ribosome"/>
    <property type="evidence" value="ECO:0007669"/>
    <property type="project" value="InterPro"/>
</dbReference>
<dbReference type="GO" id="GO:0006412">
    <property type="term" value="P:translation"/>
    <property type="evidence" value="ECO:0007669"/>
    <property type="project" value="UniProtKB-UniRule"/>
</dbReference>
<dbReference type="CDD" id="cd00427">
    <property type="entry name" value="Ribosomal_L29_HIP"/>
    <property type="match status" value="1"/>
</dbReference>
<dbReference type="FunFam" id="1.10.287.310:FF:000001">
    <property type="entry name" value="50S ribosomal protein L29"/>
    <property type="match status" value="1"/>
</dbReference>
<dbReference type="Gene3D" id="1.10.287.310">
    <property type="match status" value="1"/>
</dbReference>
<dbReference type="HAMAP" id="MF_00374">
    <property type="entry name" value="Ribosomal_uL29"/>
    <property type="match status" value="1"/>
</dbReference>
<dbReference type="InterPro" id="IPR050063">
    <property type="entry name" value="Ribosomal_protein_uL29"/>
</dbReference>
<dbReference type="InterPro" id="IPR001854">
    <property type="entry name" value="Ribosomal_uL29"/>
</dbReference>
<dbReference type="InterPro" id="IPR018254">
    <property type="entry name" value="Ribosomal_uL29_CS"/>
</dbReference>
<dbReference type="InterPro" id="IPR036049">
    <property type="entry name" value="Ribosomal_uL29_sf"/>
</dbReference>
<dbReference type="NCBIfam" id="TIGR00012">
    <property type="entry name" value="L29"/>
    <property type="match status" value="1"/>
</dbReference>
<dbReference type="PANTHER" id="PTHR10916">
    <property type="entry name" value="60S RIBOSOMAL PROTEIN L35/50S RIBOSOMAL PROTEIN L29"/>
    <property type="match status" value="1"/>
</dbReference>
<dbReference type="PANTHER" id="PTHR10916:SF0">
    <property type="entry name" value="LARGE RIBOSOMAL SUBUNIT PROTEIN UL29C"/>
    <property type="match status" value="1"/>
</dbReference>
<dbReference type="Pfam" id="PF00831">
    <property type="entry name" value="Ribosomal_L29"/>
    <property type="match status" value="1"/>
</dbReference>
<dbReference type="SUPFAM" id="SSF46561">
    <property type="entry name" value="Ribosomal protein L29 (L29p)"/>
    <property type="match status" value="1"/>
</dbReference>
<dbReference type="PROSITE" id="PS00579">
    <property type="entry name" value="RIBOSOMAL_L29"/>
    <property type="match status" value="1"/>
</dbReference>
<accession>Q0S3G8</accession>
<protein>
    <recommendedName>
        <fullName evidence="1">Large ribosomal subunit protein uL29</fullName>
    </recommendedName>
    <alternativeName>
        <fullName evidence="2">50S ribosomal protein L29</fullName>
    </alternativeName>
</protein>
<comment type="similarity">
    <text evidence="1">Belongs to the universal ribosomal protein uL29 family.</text>
</comment>
<keyword id="KW-0687">Ribonucleoprotein</keyword>
<keyword id="KW-0689">Ribosomal protein</keyword>
<sequence>MATGTPAAELRELTEEELVTRLRESKEELFNLRFQMATGQMDNNRRLRTVRHEIARIYTVLRERELGLAVGPDAGDAA</sequence>
<name>RL29_RHOJR</name>
<evidence type="ECO:0000255" key="1">
    <source>
        <dbReference type="HAMAP-Rule" id="MF_00374"/>
    </source>
</evidence>
<evidence type="ECO:0000305" key="2"/>
<feature type="chain" id="PRO_1000007586" description="Large ribosomal subunit protein uL29">
    <location>
        <begin position="1"/>
        <end position="78"/>
    </location>
</feature>
<organism>
    <name type="scientific">Rhodococcus jostii (strain RHA1)</name>
    <dbReference type="NCBI Taxonomy" id="101510"/>
    <lineage>
        <taxon>Bacteria</taxon>
        <taxon>Bacillati</taxon>
        <taxon>Actinomycetota</taxon>
        <taxon>Actinomycetes</taxon>
        <taxon>Mycobacteriales</taxon>
        <taxon>Nocardiaceae</taxon>
        <taxon>Rhodococcus</taxon>
    </lineage>
</organism>
<proteinExistence type="inferred from homology"/>